<reference key="1">
    <citation type="journal article" date="2011" name="J. Bacteriol.">
        <title>Comparative genomics of 28 Salmonella enterica isolates: evidence for CRISPR-mediated adaptive sublineage evolution.</title>
        <authorList>
            <person name="Fricke W.F."/>
            <person name="Mammel M.K."/>
            <person name="McDermott P.F."/>
            <person name="Tartera C."/>
            <person name="White D.G."/>
            <person name="Leclerc J.E."/>
            <person name="Ravel J."/>
            <person name="Cebula T.A."/>
        </authorList>
    </citation>
    <scope>NUCLEOTIDE SEQUENCE [LARGE SCALE GENOMIC DNA]</scope>
    <source>
        <strain>SL483</strain>
    </source>
</reference>
<feature type="chain" id="PRO_1000188393" description="Nucleoid occlusion factor SlmA">
    <location>
        <begin position="1"/>
        <end position="198"/>
    </location>
</feature>
<feature type="domain" description="HTH tetR-type" evidence="1">
    <location>
        <begin position="10"/>
        <end position="70"/>
    </location>
</feature>
<feature type="DNA-binding region" description="H-T-H motif" evidence="1">
    <location>
        <begin position="33"/>
        <end position="52"/>
    </location>
</feature>
<feature type="coiled-coil region" evidence="1">
    <location>
        <begin position="117"/>
        <end position="144"/>
    </location>
</feature>
<proteinExistence type="inferred from homology"/>
<sequence length="198" mass="22864">MAEKQTAKRNRREEILQSLALMLESSDGSQRITTAKLAASVGVSEAALYRHFPSKTRMFDSLIEFIEDSLITRINLILKDEKNTSTRLRLIVLLILGFGERNPGLTRILTGHALMFEQDRLQGRINQLFERIEAQLRQVLREKRMREGEGYTTDENLLASQLLAFCEGMLSRFVRSEFKYRPTDDFDARWPLIAAQLQ</sequence>
<gene>
    <name evidence="1" type="primary">slmA</name>
    <name type="ordered locus">SeAg_B3949</name>
</gene>
<dbReference type="EMBL" id="CP001138">
    <property type="protein sequence ID" value="ACH52097.1"/>
    <property type="molecule type" value="Genomic_DNA"/>
</dbReference>
<dbReference type="RefSeq" id="WP_000818607.1">
    <property type="nucleotide sequence ID" value="NC_011149.1"/>
</dbReference>
<dbReference type="SMR" id="B5EXE5"/>
<dbReference type="KEGG" id="sea:SeAg_B3949"/>
<dbReference type="HOGENOM" id="CLU_069356_5_0_6"/>
<dbReference type="Proteomes" id="UP000008819">
    <property type="component" value="Chromosome"/>
</dbReference>
<dbReference type="GO" id="GO:0043590">
    <property type="term" value="C:bacterial nucleoid"/>
    <property type="evidence" value="ECO:0007669"/>
    <property type="project" value="UniProtKB-UniRule"/>
</dbReference>
<dbReference type="GO" id="GO:0005737">
    <property type="term" value="C:cytoplasm"/>
    <property type="evidence" value="ECO:0007669"/>
    <property type="project" value="UniProtKB-UniRule"/>
</dbReference>
<dbReference type="GO" id="GO:0003700">
    <property type="term" value="F:DNA-binding transcription factor activity"/>
    <property type="evidence" value="ECO:0007669"/>
    <property type="project" value="TreeGrafter"/>
</dbReference>
<dbReference type="GO" id="GO:0000976">
    <property type="term" value="F:transcription cis-regulatory region binding"/>
    <property type="evidence" value="ECO:0007669"/>
    <property type="project" value="TreeGrafter"/>
</dbReference>
<dbReference type="GO" id="GO:0051301">
    <property type="term" value="P:cell division"/>
    <property type="evidence" value="ECO:0007669"/>
    <property type="project" value="UniProtKB-KW"/>
</dbReference>
<dbReference type="GO" id="GO:0010974">
    <property type="term" value="P:negative regulation of division septum assembly"/>
    <property type="evidence" value="ECO:0007669"/>
    <property type="project" value="InterPro"/>
</dbReference>
<dbReference type="FunFam" id="1.10.357.10:FF:000002">
    <property type="entry name" value="Nucleoid occlusion factor SlmA"/>
    <property type="match status" value="1"/>
</dbReference>
<dbReference type="Gene3D" id="1.10.357.10">
    <property type="entry name" value="Tetracycline Repressor, domain 2"/>
    <property type="match status" value="1"/>
</dbReference>
<dbReference type="HAMAP" id="MF_01839">
    <property type="entry name" value="NO_factor_SlmA"/>
    <property type="match status" value="1"/>
</dbReference>
<dbReference type="InterPro" id="IPR023772">
    <property type="entry name" value="DNA-bd_HTH_TetR-type_CS"/>
</dbReference>
<dbReference type="InterPro" id="IPR009057">
    <property type="entry name" value="Homeodomain-like_sf"/>
</dbReference>
<dbReference type="InterPro" id="IPR050109">
    <property type="entry name" value="HTH-type_TetR-like_transc_reg"/>
</dbReference>
<dbReference type="InterPro" id="IPR001647">
    <property type="entry name" value="HTH_TetR"/>
</dbReference>
<dbReference type="InterPro" id="IPR023769">
    <property type="entry name" value="NO_SlmA"/>
</dbReference>
<dbReference type="InterPro" id="IPR054580">
    <property type="entry name" value="SlmA-like_C"/>
</dbReference>
<dbReference type="InterPro" id="IPR036271">
    <property type="entry name" value="Tet_transcr_reg_TetR-rel_C_sf"/>
</dbReference>
<dbReference type="NCBIfam" id="NF007015">
    <property type="entry name" value="PRK09480.1"/>
    <property type="match status" value="1"/>
</dbReference>
<dbReference type="PANTHER" id="PTHR30055">
    <property type="entry name" value="HTH-TYPE TRANSCRIPTIONAL REGULATOR RUTR"/>
    <property type="match status" value="1"/>
</dbReference>
<dbReference type="PANTHER" id="PTHR30055:SF183">
    <property type="entry name" value="NUCLEOID OCCLUSION FACTOR SLMA"/>
    <property type="match status" value="1"/>
</dbReference>
<dbReference type="Pfam" id="PF22276">
    <property type="entry name" value="SlmA-like_C"/>
    <property type="match status" value="1"/>
</dbReference>
<dbReference type="Pfam" id="PF00440">
    <property type="entry name" value="TetR_N"/>
    <property type="match status" value="1"/>
</dbReference>
<dbReference type="SUPFAM" id="SSF46689">
    <property type="entry name" value="Homeodomain-like"/>
    <property type="match status" value="1"/>
</dbReference>
<dbReference type="SUPFAM" id="SSF48498">
    <property type="entry name" value="Tetracyclin repressor-like, C-terminal domain"/>
    <property type="match status" value="1"/>
</dbReference>
<dbReference type="PROSITE" id="PS01081">
    <property type="entry name" value="HTH_TETR_1"/>
    <property type="match status" value="1"/>
</dbReference>
<dbReference type="PROSITE" id="PS50977">
    <property type="entry name" value="HTH_TETR_2"/>
    <property type="match status" value="1"/>
</dbReference>
<name>SLMA_SALA4</name>
<organism>
    <name type="scientific">Salmonella agona (strain SL483)</name>
    <dbReference type="NCBI Taxonomy" id="454166"/>
    <lineage>
        <taxon>Bacteria</taxon>
        <taxon>Pseudomonadati</taxon>
        <taxon>Pseudomonadota</taxon>
        <taxon>Gammaproteobacteria</taxon>
        <taxon>Enterobacterales</taxon>
        <taxon>Enterobacteriaceae</taxon>
        <taxon>Salmonella</taxon>
    </lineage>
</organism>
<protein>
    <recommendedName>
        <fullName evidence="1">Nucleoid occlusion factor SlmA</fullName>
    </recommendedName>
</protein>
<keyword id="KW-0131">Cell cycle</keyword>
<keyword id="KW-0132">Cell division</keyword>
<keyword id="KW-0175">Coiled coil</keyword>
<keyword id="KW-0963">Cytoplasm</keyword>
<keyword id="KW-0238">DNA-binding</keyword>
<comment type="function">
    <text evidence="1">Required for nucleoid occlusion (NO) phenomenon, which prevents Z-ring formation and cell division over the nucleoid. Acts as a DNA-associated cell division inhibitor that binds simultaneously chromosomal DNA and FtsZ, and disrupts the assembly of FtsZ polymers. SlmA-DNA-binding sequences (SBS) are dispersed on non-Ter regions of the chromosome, preventing FtsZ polymerization at these regions.</text>
</comment>
<comment type="subunit">
    <text evidence="1">Homodimer. Interacts with FtsZ.</text>
</comment>
<comment type="subcellular location">
    <subcellularLocation>
        <location evidence="1">Cytoplasm</location>
        <location evidence="1">Nucleoid</location>
    </subcellularLocation>
</comment>
<comment type="similarity">
    <text evidence="1">Belongs to the nucleoid occlusion factor SlmA family.</text>
</comment>
<accession>B5EXE5</accession>
<evidence type="ECO:0000255" key="1">
    <source>
        <dbReference type="HAMAP-Rule" id="MF_01839"/>
    </source>
</evidence>